<proteinExistence type="evidence at protein level"/>
<dbReference type="EMBL" id="CP000802">
    <property type="protein sequence ID" value="ABV04726.1"/>
    <property type="molecule type" value="Genomic_DNA"/>
</dbReference>
<dbReference type="RefSeq" id="WP_001019654.1">
    <property type="nucleotide sequence ID" value="NC_009800.1"/>
</dbReference>
<dbReference type="KEGG" id="ecx:EcHS_A0338"/>
<dbReference type="GO" id="GO:0051607">
    <property type="term" value="P:defense response to virus"/>
    <property type="evidence" value="ECO:0007669"/>
    <property type="project" value="UniProtKB-KW"/>
</dbReference>
<dbReference type="InterPro" id="IPR050163">
    <property type="entry name" value="Apolipoprotein_A1/A4/E"/>
</dbReference>
<dbReference type="InterPro" id="IPR047679">
    <property type="entry name" value="BREX_BrxC"/>
</dbReference>
<dbReference type="InterPro" id="IPR027417">
    <property type="entry name" value="P-loop_NTPase"/>
</dbReference>
<dbReference type="NCBIfam" id="NF033441">
    <property type="entry name" value="BREX_BrxC"/>
    <property type="match status" value="1"/>
</dbReference>
<dbReference type="PANTHER" id="PTHR18976">
    <property type="entry name" value="APOLIPOPROTEIN"/>
    <property type="match status" value="1"/>
</dbReference>
<dbReference type="PANTHER" id="PTHR18976:SF34">
    <property type="entry name" value="LIPID-BINDING PROTEIN"/>
    <property type="match status" value="1"/>
</dbReference>
<dbReference type="SUPFAM" id="SSF52540">
    <property type="entry name" value="P-loop containing nucleoside triphosphate hydrolases"/>
    <property type="match status" value="1"/>
</dbReference>
<reference key="1">
    <citation type="journal article" date="2008" name="J. Bacteriol.">
        <title>The pangenome structure of Escherichia coli: comparative genomic analysis of E. coli commensal and pathogenic isolates.</title>
        <authorList>
            <person name="Rasko D.A."/>
            <person name="Rosovitz M.J."/>
            <person name="Myers G.S.A."/>
            <person name="Mongodin E.F."/>
            <person name="Fricke W.F."/>
            <person name="Gajer P."/>
            <person name="Crabtree J."/>
            <person name="Sebaihia M."/>
            <person name="Thomson N.R."/>
            <person name="Chaudhuri R."/>
            <person name="Henderson I.R."/>
            <person name="Sperandio V."/>
            <person name="Ravel J."/>
        </authorList>
    </citation>
    <scope>NUCLEOTIDE SEQUENCE [LARGE SCALE GENOMIC DNA]</scope>
    <source>
        <strain>HS</strain>
    </source>
</reference>
<reference key="2">
    <citation type="journal article" date="2019" name="Nucleic Acids Res.">
        <title>BREX system of Escherichia coli distinguishes self from non-self by methylation of a specific DNA site.</title>
        <authorList>
            <person name="Gordeeva J."/>
            <person name="Morozova N."/>
            <person name="Sierro N."/>
            <person name="Isaev A."/>
            <person name="Sinkunas T."/>
            <person name="Tsvetkova K."/>
            <person name="Matlashov M."/>
            <person name="Truncaite L."/>
            <person name="Morgan R.D."/>
            <person name="Ivanov N.V."/>
            <person name="Siksnys V."/>
            <person name="Zeng L."/>
            <person name="Severinov K."/>
        </authorList>
    </citation>
    <scope>FUNCTION IN ANTIVIRAL DEFENSE</scope>
    <scope>INDUCTION</scope>
    <scope>DISRUPTION PHENOTYPE</scope>
    <source>
        <strain>HS</strain>
    </source>
</reference>
<feature type="chain" id="PRO_0000452158" description="Probable ATP-binding protein BrxC">
    <location>
        <begin position="1"/>
        <end position="1213"/>
    </location>
</feature>
<comment type="function">
    <text evidence="1">BREX systems (bacteriophage exclusion) provide immunity against bacteriophage. Part of a type 1 BREX system which protects against dsDNA phage. This system allows phage adsorption but prevents phage DNA replication, without degradation of the phage DNA. Methylation of bacterial DNA by PglX guides self/non-self discrimination. When the brxA-brxB-brxC-pglX-pglZ-brxL genes are transformed into a susceptible E.coli strain (BW25113) they confer very high resistance to infection by bacteriophage VR7 and VpaE1, about 100-fold protection against lambda, T5 and T7 and no protection against RNA phage Qbeta, ssDNA phage M13 or dSDNA phage T4 and VR5. Glycosylated phage DNA is not susceptible to BREX. The BREX system does not confer resistance to lysogenic lambda phage, i.e. prophage that are integrated into the chromosomal DNA and then induced to form phage.</text>
</comment>
<comment type="induction">
    <text evidence="1">Transcribed at slowly increasing levels as cells progress from lag to exponential to stationary phase.</text>
</comment>
<comment type="disruption phenotype">
    <text evidence="1">No methylation of 5'-GGTAAG-3' in chromosomal DNA, BREX no longer confers phage resistance.</text>
</comment>
<comment type="similarity">
    <text evidence="3">Belongs to the BrxC family.</text>
</comment>
<keyword id="KW-0051">Antiviral defense</keyword>
<protein>
    <recommendedName>
        <fullName evidence="2">Probable ATP-binding protein BrxC</fullName>
    </recommendedName>
    <alternativeName>
        <fullName evidence="2">BREX protein BrxC</fullName>
    </alternativeName>
</protein>
<accession>P0DUF8</accession>
<accession>A0A7M3S2P3</accession>
<organism>
    <name type="scientific">Escherichia coli O9:H4 (strain HS)</name>
    <dbReference type="NCBI Taxonomy" id="331112"/>
    <lineage>
        <taxon>Bacteria</taxon>
        <taxon>Pseudomonadati</taxon>
        <taxon>Pseudomonadota</taxon>
        <taxon>Gammaproteobacteria</taxon>
        <taxon>Enterobacterales</taxon>
        <taxon>Enterobacteriaceae</taxon>
        <taxon>Escherichia</taxon>
    </lineage>
</organism>
<sequence length="1213" mass="139272">MNIEQIFKKPLKRNINGVVKAEQTDDASAYIELDEYVITRELENHLRHFFESYVPATGPERIRMENKIGVWVSGFFGSGKSHFIKILSYLLSNRKVTHNGTERNAYSFFEEKIKDALFLADINKAVHYPTEVILFNIDSRANVDDKEDAILKVFLKVFNERIGYCADFPHIAHLERELDKRGQYETFKAAFADINGSRWEDERDAYYFISDDMAQALSQATQQSLEASRQWVEQLDKNFPLDINNFCQWVKEWLDDNGKNILFMVDEVGQFIGKNTQMMLKLQTITENLGVICGGRAWVIVTSQADINAAIGGMSSRDGQDFSKIQGRFSTRLQLSSSNTSEVIQKRLLVKTDEAKAALAKVWQEKGDILRNQLAFDTTTTTALRPFTSEEEFVDNYPFVPWHYQILQKVFESIRTKGAAGKQLAMGERSQLEAFQTAAQQISAQGLDSLVPFWRFYAAIESFLEPAVSRTITQACQNGILDEFDGNLLKTLFLIRYVETLKSTLDNLVTLSIDRIDADKVELRRRVEKSLNTLERLMLIARVEDKYVFLTNEEKEIENEIRNVDVDFSAINKKLASIIFDDILKSRKYRYPANKQDFDISRFLNGHPLDGAVLNDLVVKILTPKDPTYSFYNSDATCRPYTSEGDGCILIRLPEEGRTWSDIDLVVQTEKFLKDNAGQRPEQATLLSEKARENSNREKLLRVQLESLLAEADVWAIGERLPKKSSTPSNIVDEACRYVIENTFGKLKMLRPFNGDISREIHALLTVENDTELDLGNLEESNPDAMREVETWISMNIEYNKPVYLRDILNHFARRPYGWPEDEVKLLVARLACKGKFSFSQQNNNVERKQAWELFNNSRRHSELRLHKVRRHDEAQVRKAAQTMADIAQQPFNEREEPALVEHIRQVFEEWKQELNVFRAKAEGGNNPGKNEIESGLRLLNAILNEKEDFALIEKVSSLKDELLDFSEDREDLVDFYRKQFATWQKLGAALNGSFKSNRSALEKDAAAVKALGELESIWQMPEPYKHLNRITLLIEQVQNVNHQLVEQHRQHALERIDARIEESRQRLLEAHATSELQNSVLLPMQKARKRAEVSQSIPEILAEQQETKALQMDADKKINLWIDELRKKQEAQLRAANEAKRAAESEQTYVVVEKPVIQPVPKKTHLVNVASEMRNATGGEVLETTEQVEKALDTLRTTLLAAIKAGDRIRLQ</sequence>
<evidence type="ECO:0000269" key="1">
    <source>
    </source>
</evidence>
<evidence type="ECO:0000303" key="2">
    <source>
    </source>
</evidence>
<evidence type="ECO:0000305" key="3"/>
<gene>
    <name evidence="2" type="primary">brxC</name>
    <name type="ordered locus">EcHS_A0338</name>
</gene>
<name>BRXC_ECOHS</name>